<dbReference type="EC" id="3.6.1.26" evidence="1"/>
<dbReference type="EMBL" id="FM180568">
    <property type="protein sequence ID" value="CAS11770.1"/>
    <property type="molecule type" value="Genomic_DNA"/>
</dbReference>
<dbReference type="RefSeq" id="WP_001298413.1">
    <property type="nucleotide sequence ID" value="NC_011601.1"/>
</dbReference>
<dbReference type="SMR" id="B7UNN8"/>
<dbReference type="KEGG" id="ecg:E2348C_4222"/>
<dbReference type="HOGENOM" id="CLU_077117_0_1_6"/>
<dbReference type="UniPathway" id="UPA00609">
    <property type="reaction ID" value="UER00664"/>
</dbReference>
<dbReference type="Proteomes" id="UP000008205">
    <property type="component" value="Chromosome"/>
</dbReference>
<dbReference type="GO" id="GO:0005886">
    <property type="term" value="C:plasma membrane"/>
    <property type="evidence" value="ECO:0007669"/>
    <property type="project" value="UniProtKB-SubCell"/>
</dbReference>
<dbReference type="GO" id="GO:0008715">
    <property type="term" value="F:CDP-diacylglycerol diphosphatase activity"/>
    <property type="evidence" value="ECO:0007669"/>
    <property type="project" value="UniProtKB-UniRule"/>
</dbReference>
<dbReference type="GO" id="GO:0046342">
    <property type="term" value="P:CDP-diacylglycerol catabolic process"/>
    <property type="evidence" value="ECO:0007669"/>
    <property type="project" value="UniProtKB-UniRule"/>
</dbReference>
<dbReference type="GO" id="GO:0008654">
    <property type="term" value="P:phospholipid biosynthetic process"/>
    <property type="evidence" value="ECO:0007669"/>
    <property type="project" value="UniProtKB-KW"/>
</dbReference>
<dbReference type="FunFam" id="3.30.428.30:FF:000001">
    <property type="entry name" value="CDP-diacylglycerol pyrophosphatase"/>
    <property type="match status" value="1"/>
</dbReference>
<dbReference type="Gene3D" id="3.30.428.30">
    <property type="entry name" value="HIT family - CDH-like"/>
    <property type="match status" value="1"/>
</dbReference>
<dbReference type="HAMAP" id="MF_00319">
    <property type="entry name" value="Cdh"/>
    <property type="match status" value="1"/>
</dbReference>
<dbReference type="InterPro" id="IPR003763">
    <property type="entry name" value="CDP-diacylglyc_Pase"/>
</dbReference>
<dbReference type="InterPro" id="IPR015993">
    <property type="entry name" value="CDP-diacylglyc_Pase_proteobac"/>
</dbReference>
<dbReference type="InterPro" id="IPR036265">
    <property type="entry name" value="HIT-like_sf"/>
</dbReference>
<dbReference type="NCBIfam" id="TIGR00672">
    <property type="entry name" value="cdh"/>
    <property type="match status" value="1"/>
</dbReference>
<dbReference type="NCBIfam" id="NF003986">
    <property type="entry name" value="PRK05471.1-5"/>
    <property type="match status" value="1"/>
</dbReference>
<dbReference type="NCBIfam" id="NF003987">
    <property type="entry name" value="PRK05471.1-6"/>
    <property type="match status" value="1"/>
</dbReference>
<dbReference type="Pfam" id="PF02611">
    <property type="entry name" value="CDH"/>
    <property type="match status" value="1"/>
</dbReference>
<dbReference type="PIRSF" id="PIRSF001273">
    <property type="entry name" value="CDH"/>
    <property type="match status" value="1"/>
</dbReference>
<dbReference type="SUPFAM" id="SSF54197">
    <property type="entry name" value="HIT-like"/>
    <property type="match status" value="1"/>
</dbReference>
<evidence type="ECO:0000255" key="1">
    <source>
        <dbReference type="HAMAP-Rule" id="MF_00319"/>
    </source>
</evidence>
<sequence length="251" mass="28449">MKKAGLLFLVMIVIAVVAAGIGYWKLTGEESDTLRKIVLEQCLPNQQENQNPSPCAEVKPNAGYVVLKDRHGPLQYLLMPTYRINGTESPLLTDPSTPNFFWLAWQARDFMSQKYGQPVPDRAVSLAINSRTGRTQNHFHIHISCIRPDVREQLDNNLANISSRWLPLPGGLRGHEYLARRVTESELVQRSPFMMLAEEVPEAREHMGSYGLAMVRQSDNSFVLLATQRNLLTLNRASAEEIQDHQCEILR</sequence>
<name>CDH_ECO27</name>
<accession>B7UNN8</accession>
<reference key="1">
    <citation type="journal article" date="2009" name="J. Bacteriol.">
        <title>Complete genome sequence and comparative genome analysis of enteropathogenic Escherichia coli O127:H6 strain E2348/69.</title>
        <authorList>
            <person name="Iguchi A."/>
            <person name="Thomson N.R."/>
            <person name="Ogura Y."/>
            <person name="Saunders D."/>
            <person name="Ooka T."/>
            <person name="Henderson I.R."/>
            <person name="Harris D."/>
            <person name="Asadulghani M."/>
            <person name="Kurokawa K."/>
            <person name="Dean P."/>
            <person name="Kenny B."/>
            <person name="Quail M.A."/>
            <person name="Thurston S."/>
            <person name="Dougan G."/>
            <person name="Hayashi T."/>
            <person name="Parkhill J."/>
            <person name="Frankel G."/>
        </authorList>
    </citation>
    <scope>NUCLEOTIDE SEQUENCE [LARGE SCALE GENOMIC DNA]</scope>
    <source>
        <strain>E2348/69 / EPEC</strain>
    </source>
</reference>
<gene>
    <name evidence="1" type="primary">cdh</name>
    <name type="ordered locus">E2348C_4222</name>
</gene>
<organism>
    <name type="scientific">Escherichia coli O127:H6 (strain E2348/69 / EPEC)</name>
    <dbReference type="NCBI Taxonomy" id="574521"/>
    <lineage>
        <taxon>Bacteria</taxon>
        <taxon>Pseudomonadati</taxon>
        <taxon>Pseudomonadota</taxon>
        <taxon>Gammaproteobacteria</taxon>
        <taxon>Enterobacterales</taxon>
        <taxon>Enterobacteriaceae</taxon>
        <taxon>Escherichia</taxon>
    </lineage>
</organism>
<comment type="catalytic activity">
    <reaction evidence="1">
        <text>a CDP-1,2-diacyl-sn-glycerol + H2O = a 1,2-diacyl-sn-glycero-3-phosphate + CMP + 2 H(+)</text>
        <dbReference type="Rhea" id="RHEA:15221"/>
        <dbReference type="ChEBI" id="CHEBI:15377"/>
        <dbReference type="ChEBI" id="CHEBI:15378"/>
        <dbReference type="ChEBI" id="CHEBI:58332"/>
        <dbReference type="ChEBI" id="CHEBI:58608"/>
        <dbReference type="ChEBI" id="CHEBI:60377"/>
        <dbReference type="EC" id="3.6.1.26"/>
    </reaction>
</comment>
<comment type="pathway">
    <text evidence="1">Phospholipid metabolism; CDP-diacylglycerol degradation; phosphatidate from CDP-diacylglycerol: step 1/1.</text>
</comment>
<comment type="subcellular location">
    <subcellularLocation>
        <location evidence="1">Cell inner membrane</location>
        <topology evidence="1">Single-pass membrane protein</topology>
    </subcellularLocation>
</comment>
<comment type="similarity">
    <text evidence="1">Belongs to the Cdh family.</text>
</comment>
<proteinExistence type="inferred from homology"/>
<protein>
    <recommendedName>
        <fullName evidence="1">CDP-diacylglycerol pyrophosphatase</fullName>
        <ecNumber evidence="1">3.6.1.26</ecNumber>
    </recommendedName>
    <alternativeName>
        <fullName evidence="1">CDP-diacylglycerol phosphatidylhydrolase</fullName>
    </alternativeName>
    <alternativeName>
        <fullName evidence="1">CDP-diglyceride hydrolase</fullName>
    </alternativeName>
</protein>
<feature type="chain" id="PRO_1000133032" description="CDP-diacylglycerol pyrophosphatase">
    <location>
        <begin position="1"/>
        <end position="251"/>
    </location>
</feature>
<feature type="transmembrane region" description="Helical" evidence="1">
    <location>
        <begin position="4"/>
        <end position="24"/>
    </location>
</feature>
<keyword id="KW-0997">Cell inner membrane</keyword>
<keyword id="KW-1003">Cell membrane</keyword>
<keyword id="KW-0378">Hydrolase</keyword>
<keyword id="KW-0444">Lipid biosynthesis</keyword>
<keyword id="KW-0443">Lipid metabolism</keyword>
<keyword id="KW-0472">Membrane</keyword>
<keyword id="KW-0594">Phospholipid biosynthesis</keyword>
<keyword id="KW-1208">Phospholipid metabolism</keyword>
<keyword id="KW-1185">Reference proteome</keyword>
<keyword id="KW-0812">Transmembrane</keyword>
<keyword id="KW-1133">Transmembrane helix</keyword>